<feature type="chain" id="PRO_0000252304" description="Translationally-controlled tumor protein homolog">
    <location>
        <begin position="1"/>
        <end position="177"/>
    </location>
</feature>
<feature type="domain" description="TCTP" evidence="2">
    <location>
        <begin position="1"/>
        <end position="177"/>
    </location>
</feature>
<name>TCTP_TRIPS</name>
<accession>Q2L875</accession>
<comment type="function">
    <text evidence="1">Involved in calcium binding and microtubule stabilization.</text>
</comment>
<comment type="subcellular location">
    <subcellularLocation>
        <location evidence="1">Cytoplasm</location>
    </subcellularLocation>
</comment>
<comment type="similarity">
    <text evidence="2">Belongs to the TCTP family.</text>
</comment>
<keyword id="KW-0106">Calcium</keyword>
<keyword id="KW-0963">Cytoplasm</keyword>
<dbReference type="EMBL" id="DQ350146">
    <property type="protein sequence ID" value="ABC71305.1"/>
    <property type="molecule type" value="mRNA"/>
</dbReference>
<dbReference type="SMR" id="Q2L875"/>
<dbReference type="GO" id="GO:0005737">
    <property type="term" value="C:cytoplasm"/>
    <property type="evidence" value="ECO:0007669"/>
    <property type="project" value="UniProtKB-SubCell"/>
</dbReference>
<dbReference type="GO" id="GO:0005509">
    <property type="term" value="F:calcium ion binding"/>
    <property type="evidence" value="ECO:0007669"/>
    <property type="project" value="TreeGrafter"/>
</dbReference>
<dbReference type="FunFam" id="2.170.150.10:FF:000010">
    <property type="entry name" value="Translationally-controlled tumor protein homolog"/>
    <property type="match status" value="1"/>
</dbReference>
<dbReference type="Gene3D" id="2.170.150.10">
    <property type="entry name" value="Metal Binding Protein, Guanine Nucleotide Exchange Factor, Chain A"/>
    <property type="match status" value="1"/>
</dbReference>
<dbReference type="InterPro" id="IPR011057">
    <property type="entry name" value="Mss4-like_sf"/>
</dbReference>
<dbReference type="InterPro" id="IPR011323">
    <property type="entry name" value="Mss4/transl-control_tumour"/>
</dbReference>
<dbReference type="InterPro" id="IPR034737">
    <property type="entry name" value="TCTP"/>
</dbReference>
<dbReference type="InterPro" id="IPR018105">
    <property type="entry name" value="Translational_control_tumour_p"/>
</dbReference>
<dbReference type="PANTHER" id="PTHR11991">
    <property type="entry name" value="TRANSLATIONALLY CONTROLLED TUMOR PROTEIN-RELATED"/>
    <property type="match status" value="1"/>
</dbReference>
<dbReference type="PANTHER" id="PTHR11991:SF0">
    <property type="entry name" value="TRANSLATIONALLY-CONTROLLED TUMOR PROTEIN"/>
    <property type="match status" value="1"/>
</dbReference>
<dbReference type="Pfam" id="PF00838">
    <property type="entry name" value="TCTP"/>
    <property type="match status" value="1"/>
</dbReference>
<dbReference type="PRINTS" id="PR01653">
    <property type="entry name" value="TCTPROTEIN"/>
</dbReference>
<dbReference type="SUPFAM" id="SSF51316">
    <property type="entry name" value="Mss4-like"/>
    <property type="match status" value="1"/>
</dbReference>
<dbReference type="PROSITE" id="PS51797">
    <property type="entry name" value="TCTP_3"/>
    <property type="match status" value="1"/>
</dbReference>
<sequence>MIIYRDLFSGDELCSDTFPMKLVNDVVFEFTGKHVVRKLGEVTLEGANPSAEEFDEGTEEQMESGIDIVLNHQLMEMPMYQDIKIFKDWIKEYMKKLVEKMKSDGESEESISKFKKNMQEYVTSLLKKDRFKELQFFSGPGENAAEGQLAIVEYRQVSDTEQPIVMLIKQGLVVEKC</sequence>
<organism>
    <name type="scientific">Trichinella pseudospiralis</name>
    <name type="common">Parasitic roundworm</name>
    <dbReference type="NCBI Taxonomy" id="6337"/>
    <lineage>
        <taxon>Eukaryota</taxon>
        <taxon>Metazoa</taxon>
        <taxon>Ecdysozoa</taxon>
        <taxon>Nematoda</taxon>
        <taxon>Enoplea</taxon>
        <taxon>Dorylaimia</taxon>
        <taxon>Trichinellida</taxon>
        <taxon>Trichinellidae</taxon>
        <taxon>Trichinella</taxon>
    </lineage>
</organism>
<reference key="1">
    <citation type="submission" date="2006-01" db="EMBL/GenBank/DDBJ databases">
        <authorList>
            <person name="Mak C.H."/>
            <person name="Lun H.M."/>
            <person name="Poon M.W."/>
            <person name="Kwok P.Y."/>
            <person name="Ko R.C."/>
        </authorList>
    </citation>
    <scope>NUCLEOTIDE SEQUENCE [MRNA]</scope>
</reference>
<evidence type="ECO:0000250" key="1"/>
<evidence type="ECO:0000255" key="2">
    <source>
        <dbReference type="PROSITE-ProRule" id="PRU01133"/>
    </source>
</evidence>
<proteinExistence type="evidence at transcript level"/>
<protein>
    <recommendedName>
        <fullName>Translationally-controlled tumor protein homolog</fullName>
        <shortName>TCTP</shortName>
    </recommendedName>
</protein>